<accession>A9KEQ6</accession>
<reference key="1">
    <citation type="journal article" date="2009" name="Infect. Immun.">
        <title>Comparative genomics reveal extensive transposon-mediated genomic plasticity and diversity among potential effector proteins within the genus Coxiella.</title>
        <authorList>
            <person name="Beare P.A."/>
            <person name="Unsworth N."/>
            <person name="Andoh M."/>
            <person name="Voth D.E."/>
            <person name="Omsland A."/>
            <person name="Gilk S.D."/>
            <person name="Williams K.P."/>
            <person name="Sobral B.W."/>
            <person name="Kupko J.J. III"/>
            <person name="Porcella S.F."/>
            <person name="Samuel J.E."/>
            <person name="Heinzen R.A."/>
        </authorList>
    </citation>
    <scope>NUCLEOTIDE SEQUENCE [LARGE SCALE GENOMIC DNA]</scope>
    <source>
        <strain>Dugway 5J108-111</strain>
    </source>
</reference>
<evidence type="ECO:0000255" key="1">
    <source>
        <dbReference type="HAMAP-Rule" id="MF_00388"/>
    </source>
</evidence>
<gene>
    <name evidence="1" type="primary">lpxC</name>
    <name type="ordered locus">CBUD_1965</name>
</gene>
<comment type="function">
    <text evidence="1">Catalyzes the hydrolysis of UDP-3-O-myristoyl-N-acetylglucosamine to form UDP-3-O-myristoylglucosamine and acetate, the committed step in lipid A biosynthesis.</text>
</comment>
<comment type="catalytic activity">
    <reaction evidence="1">
        <text>a UDP-3-O-[(3R)-3-hydroxyacyl]-N-acetyl-alpha-D-glucosamine + H2O = a UDP-3-O-[(3R)-3-hydroxyacyl]-alpha-D-glucosamine + acetate</text>
        <dbReference type="Rhea" id="RHEA:67816"/>
        <dbReference type="ChEBI" id="CHEBI:15377"/>
        <dbReference type="ChEBI" id="CHEBI:30089"/>
        <dbReference type="ChEBI" id="CHEBI:137740"/>
        <dbReference type="ChEBI" id="CHEBI:173225"/>
        <dbReference type="EC" id="3.5.1.108"/>
    </reaction>
</comment>
<comment type="cofactor">
    <cofactor evidence="1">
        <name>Zn(2+)</name>
        <dbReference type="ChEBI" id="CHEBI:29105"/>
    </cofactor>
</comment>
<comment type="pathway">
    <text evidence="1">Glycolipid biosynthesis; lipid IV(A) biosynthesis; lipid IV(A) from (3R)-3-hydroxytetradecanoyl-[acyl-carrier-protein] and UDP-N-acetyl-alpha-D-glucosamine: step 2/6.</text>
</comment>
<comment type="similarity">
    <text evidence="1">Belongs to the LpxC family.</text>
</comment>
<feature type="chain" id="PRO_1000080216" description="UDP-3-O-acyl-N-acetylglucosamine deacetylase">
    <location>
        <begin position="1"/>
        <end position="303"/>
    </location>
</feature>
<feature type="active site" description="Proton donor" evidence="1">
    <location>
        <position position="264"/>
    </location>
</feature>
<feature type="binding site" evidence="1">
    <location>
        <position position="78"/>
    </location>
    <ligand>
        <name>Zn(2+)</name>
        <dbReference type="ChEBI" id="CHEBI:29105"/>
    </ligand>
</feature>
<feature type="binding site" evidence="1">
    <location>
        <position position="237"/>
    </location>
    <ligand>
        <name>Zn(2+)</name>
        <dbReference type="ChEBI" id="CHEBI:29105"/>
    </ligand>
</feature>
<feature type="binding site" evidence="1">
    <location>
        <position position="241"/>
    </location>
    <ligand>
        <name>Zn(2+)</name>
        <dbReference type="ChEBI" id="CHEBI:29105"/>
    </ligand>
</feature>
<keyword id="KW-0378">Hydrolase</keyword>
<keyword id="KW-0441">Lipid A biosynthesis</keyword>
<keyword id="KW-0444">Lipid biosynthesis</keyword>
<keyword id="KW-0443">Lipid metabolism</keyword>
<keyword id="KW-0479">Metal-binding</keyword>
<keyword id="KW-0862">Zinc</keyword>
<name>LPXC_COXBN</name>
<dbReference type="EC" id="3.5.1.108" evidence="1"/>
<dbReference type="EMBL" id="CP000733">
    <property type="protein sequence ID" value="ABS77381.1"/>
    <property type="molecule type" value="Genomic_DNA"/>
</dbReference>
<dbReference type="RefSeq" id="WP_010957401.1">
    <property type="nucleotide sequence ID" value="NC_009727.1"/>
</dbReference>
<dbReference type="SMR" id="A9KEQ6"/>
<dbReference type="KEGG" id="cbd:CBUD_1965"/>
<dbReference type="HOGENOM" id="CLU_046528_1_0_6"/>
<dbReference type="UniPathway" id="UPA00359">
    <property type="reaction ID" value="UER00478"/>
</dbReference>
<dbReference type="Proteomes" id="UP000008555">
    <property type="component" value="Chromosome"/>
</dbReference>
<dbReference type="GO" id="GO:0016020">
    <property type="term" value="C:membrane"/>
    <property type="evidence" value="ECO:0007669"/>
    <property type="project" value="GOC"/>
</dbReference>
<dbReference type="GO" id="GO:0046872">
    <property type="term" value="F:metal ion binding"/>
    <property type="evidence" value="ECO:0007669"/>
    <property type="project" value="UniProtKB-KW"/>
</dbReference>
<dbReference type="GO" id="GO:0103117">
    <property type="term" value="F:UDP-3-O-acyl-N-acetylglucosamine deacetylase activity"/>
    <property type="evidence" value="ECO:0007669"/>
    <property type="project" value="UniProtKB-UniRule"/>
</dbReference>
<dbReference type="GO" id="GO:0009245">
    <property type="term" value="P:lipid A biosynthetic process"/>
    <property type="evidence" value="ECO:0007669"/>
    <property type="project" value="UniProtKB-UniRule"/>
</dbReference>
<dbReference type="Gene3D" id="3.30.230.20">
    <property type="entry name" value="lpxc deacetylase, domain 1"/>
    <property type="match status" value="1"/>
</dbReference>
<dbReference type="Gene3D" id="3.30.1700.10">
    <property type="entry name" value="lpxc deacetylase, domain 2"/>
    <property type="match status" value="1"/>
</dbReference>
<dbReference type="HAMAP" id="MF_00388">
    <property type="entry name" value="LpxC"/>
    <property type="match status" value="1"/>
</dbReference>
<dbReference type="InterPro" id="IPR020568">
    <property type="entry name" value="Ribosomal_Su5_D2-typ_SF"/>
</dbReference>
<dbReference type="InterPro" id="IPR004463">
    <property type="entry name" value="UDP-acyl_GlcNac_deAcase"/>
</dbReference>
<dbReference type="InterPro" id="IPR011334">
    <property type="entry name" value="UDP-acyl_GlcNac_deAcase_C"/>
</dbReference>
<dbReference type="InterPro" id="IPR015870">
    <property type="entry name" value="UDP-acyl_N-AcGlcN_deAcase_N"/>
</dbReference>
<dbReference type="NCBIfam" id="TIGR00325">
    <property type="entry name" value="lpxC"/>
    <property type="match status" value="1"/>
</dbReference>
<dbReference type="PANTHER" id="PTHR33694">
    <property type="entry name" value="UDP-3-O-ACYL-N-ACETYLGLUCOSAMINE DEACETYLASE 1, MITOCHONDRIAL-RELATED"/>
    <property type="match status" value="1"/>
</dbReference>
<dbReference type="PANTHER" id="PTHR33694:SF1">
    <property type="entry name" value="UDP-3-O-ACYL-N-ACETYLGLUCOSAMINE DEACETYLASE 1, MITOCHONDRIAL-RELATED"/>
    <property type="match status" value="1"/>
</dbReference>
<dbReference type="Pfam" id="PF03331">
    <property type="entry name" value="LpxC"/>
    <property type="match status" value="1"/>
</dbReference>
<dbReference type="SUPFAM" id="SSF54211">
    <property type="entry name" value="Ribosomal protein S5 domain 2-like"/>
    <property type="match status" value="2"/>
</dbReference>
<protein>
    <recommendedName>
        <fullName evidence="1">UDP-3-O-acyl-N-acetylglucosamine deacetylase</fullName>
        <shortName evidence="1">UDP-3-O-acyl-GlcNAc deacetylase</shortName>
        <ecNumber evidence="1">3.5.1.108</ecNumber>
    </recommendedName>
    <alternativeName>
        <fullName evidence="1">UDP-3-O-[R-3-hydroxymyristoyl]-N-acetylglucosamine deacetylase</fullName>
    </alternativeName>
</protein>
<sequence length="303" mass="33514">MIKQRTLKNVVRATGVGVHTGEKVYLTLRPAPPNTGIIFCRTDLDPVVQIPARVNYIGDTSLSTCLTKGDVRIATVEHLLSALAGVGVDNLYIDLTSPELPIMDGSAGPFVFLIQSAGIEEQNAPKEFIRIKQRVKIEEADKSVMVEPYNGFKISFGIDFDHPLFNEHNQNATLDFSSTSYVKEVSRARTFGFLSDYEFIRKNNLALGASLDNALVLDEYKILNQDGLRYPDEFVKHKILDVIGDLYLLGRSLIGSFSGVKSGHTLNSQLLKQLLATKSAWEIVTFKDPSELPFAYTPVAMTA</sequence>
<proteinExistence type="inferred from homology"/>
<organism>
    <name type="scientific">Coxiella burnetii (strain Dugway 5J108-111)</name>
    <dbReference type="NCBI Taxonomy" id="434922"/>
    <lineage>
        <taxon>Bacteria</taxon>
        <taxon>Pseudomonadati</taxon>
        <taxon>Pseudomonadota</taxon>
        <taxon>Gammaproteobacteria</taxon>
        <taxon>Legionellales</taxon>
        <taxon>Coxiellaceae</taxon>
        <taxon>Coxiella</taxon>
    </lineage>
</organism>